<feature type="chain" id="PRO_0000380395" description="DNA ligase">
    <location>
        <begin position="1"/>
        <end position="675"/>
    </location>
</feature>
<feature type="domain" description="BRCT" evidence="1">
    <location>
        <begin position="596"/>
        <end position="675"/>
    </location>
</feature>
<feature type="active site" description="N6-AMP-lysine intermediate" evidence="1">
    <location>
        <position position="122"/>
    </location>
</feature>
<feature type="binding site" evidence="1">
    <location>
        <begin position="41"/>
        <end position="45"/>
    </location>
    <ligand>
        <name>NAD(+)</name>
        <dbReference type="ChEBI" id="CHEBI:57540"/>
    </ligand>
</feature>
<feature type="binding site" evidence="1">
    <location>
        <begin position="90"/>
        <end position="91"/>
    </location>
    <ligand>
        <name>NAD(+)</name>
        <dbReference type="ChEBI" id="CHEBI:57540"/>
    </ligand>
</feature>
<feature type="binding site" evidence="1">
    <location>
        <position position="120"/>
    </location>
    <ligand>
        <name>NAD(+)</name>
        <dbReference type="ChEBI" id="CHEBI:57540"/>
    </ligand>
</feature>
<feature type="binding site" evidence="1">
    <location>
        <position position="143"/>
    </location>
    <ligand>
        <name>NAD(+)</name>
        <dbReference type="ChEBI" id="CHEBI:57540"/>
    </ligand>
</feature>
<feature type="binding site" evidence="1">
    <location>
        <position position="178"/>
    </location>
    <ligand>
        <name>NAD(+)</name>
        <dbReference type="ChEBI" id="CHEBI:57540"/>
    </ligand>
</feature>
<feature type="binding site" evidence="1">
    <location>
        <position position="295"/>
    </location>
    <ligand>
        <name>NAD(+)</name>
        <dbReference type="ChEBI" id="CHEBI:57540"/>
    </ligand>
</feature>
<feature type="binding site" evidence="1">
    <location>
        <position position="319"/>
    </location>
    <ligand>
        <name>NAD(+)</name>
        <dbReference type="ChEBI" id="CHEBI:57540"/>
    </ligand>
</feature>
<feature type="binding site" evidence="1">
    <location>
        <position position="413"/>
    </location>
    <ligand>
        <name>Zn(2+)</name>
        <dbReference type="ChEBI" id="CHEBI:29105"/>
    </ligand>
</feature>
<feature type="binding site" evidence="1">
    <location>
        <position position="416"/>
    </location>
    <ligand>
        <name>Zn(2+)</name>
        <dbReference type="ChEBI" id="CHEBI:29105"/>
    </ligand>
</feature>
<feature type="binding site" evidence="1">
    <location>
        <position position="431"/>
    </location>
    <ligand>
        <name>Zn(2+)</name>
        <dbReference type="ChEBI" id="CHEBI:29105"/>
    </ligand>
</feature>
<feature type="binding site" evidence="1">
    <location>
        <position position="436"/>
    </location>
    <ligand>
        <name>Zn(2+)</name>
        <dbReference type="ChEBI" id="CHEBI:29105"/>
    </ligand>
</feature>
<comment type="function">
    <text evidence="1">DNA ligase that catalyzes the formation of phosphodiester linkages between 5'-phosphoryl and 3'-hydroxyl groups in double-stranded DNA using NAD as a coenzyme and as the energy source for the reaction. It is essential for DNA replication and repair of damaged DNA.</text>
</comment>
<comment type="catalytic activity">
    <reaction evidence="1">
        <text>NAD(+) + (deoxyribonucleotide)n-3'-hydroxyl + 5'-phospho-(deoxyribonucleotide)m = (deoxyribonucleotide)n+m + AMP + beta-nicotinamide D-nucleotide.</text>
        <dbReference type="EC" id="6.5.1.2"/>
    </reaction>
</comment>
<comment type="cofactor">
    <cofactor evidence="1">
        <name>Mg(2+)</name>
        <dbReference type="ChEBI" id="CHEBI:18420"/>
    </cofactor>
    <cofactor evidence="1">
        <name>Mn(2+)</name>
        <dbReference type="ChEBI" id="CHEBI:29035"/>
    </cofactor>
</comment>
<comment type="similarity">
    <text evidence="1">Belongs to the NAD-dependent DNA ligase family. LigA subfamily.</text>
</comment>
<keyword id="KW-0227">DNA damage</keyword>
<keyword id="KW-0234">DNA repair</keyword>
<keyword id="KW-0235">DNA replication</keyword>
<keyword id="KW-0436">Ligase</keyword>
<keyword id="KW-0460">Magnesium</keyword>
<keyword id="KW-0464">Manganese</keyword>
<keyword id="KW-0479">Metal-binding</keyword>
<keyword id="KW-0520">NAD</keyword>
<keyword id="KW-1185">Reference proteome</keyword>
<keyword id="KW-0862">Zinc</keyword>
<proteinExistence type="inferred from homology"/>
<sequence>MVAREGGPAPADAAQRIAELREQIRRHDYCYYVLDAPEISDAEYDRLMRELLDLEQSHPELVTADSPSQRVGGQPLAAFRAVSHRVPLLSLANAVDDQDLREFDRRARERADRPLTYVVEPKIDGLTVVLSYEEGRFIRAATRGDGLIGEDITENIKTVRAVPLRLKRDIKSLEVRGEAYLPKAAFARLNEEREEAGEAAFANPRNAAAGSLRQLDPKVTASRPLRAYFYNILHLEGADGVGEQVEALQMLEDLGLPVNPERRYCRTIDDVIDYCRYWTEHRHDLPYEIDGMVVKVNELDQYPLLGETAKSPRYAIAFKFPPEQAITRVRDITVKVGRTGVITPTAELEPVRLAGTTVSRATLHNEDIIRERDIHIGDYVVIQKAGDIIPEVLSVLKEKRTGEERPFFMPQTCPECHSPVSRLKGEAAIRCTSLACPAQAKEGLIHFASRDAMNIEGLGPAVVNLLWEAGLVRDPADLYDLTAEQVAPLERMGKKSAANLIAAIENSKSRGLAALIFALGIRLVGQTAAKTLARHFGSMDQLMKATTEELQAVSEIGPKMAESLQRWFAVPANRQMIDRLAEKGLQMETEKAGDAGVPQTFAGKTVVLTGTLTTLDRREAQRLLEERGAKVASSVSKKTSLVIAGEAAGSKLEKAKELNIPILSEADFLQLIDRV</sequence>
<dbReference type="EC" id="6.5.1.2" evidence="1"/>
<dbReference type="EMBL" id="CP000930">
    <property type="protein sequence ID" value="ABZ85535.1"/>
    <property type="molecule type" value="Genomic_DNA"/>
</dbReference>
<dbReference type="RefSeq" id="WP_012284010.1">
    <property type="nucleotide sequence ID" value="NC_010337.2"/>
</dbReference>
<dbReference type="SMR" id="B0TDL0"/>
<dbReference type="STRING" id="498761.HM1_3028"/>
<dbReference type="KEGG" id="hmo:HM1_3028"/>
<dbReference type="eggNOG" id="COG0272">
    <property type="taxonomic scope" value="Bacteria"/>
</dbReference>
<dbReference type="HOGENOM" id="CLU_007764_2_1_9"/>
<dbReference type="OrthoDB" id="9759736at2"/>
<dbReference type="Proteomes" id="UP000008550">
    <property type="component" value="Chromosome"/>
</dbReference>
<dbReference type="GO" id="GO:0005829">
    <property type="term" value="C:cytosol"/>
    <property type="evidence" value="ECO:0007669"/>
    <property type="project" value="TreeGrafter"/>
</dbReference>
<dbReference type="GO" id="GO:0003677">
    <property type="term" value="F:DNA binding"/>
    <property type="evidence" value="ECO:0007669"/>
    <property type="project" value="InterPro"/>
</dbReference>
<dbReference type="GO" id="GO:0003911">
    <property type="term" value="F:DNA ligase (NAD+) activity"/>
    <property type="evidence" value="ECO:0007669"/>
    <property type="project" value="UniProtKB-UniRule"/>
</dbReference>
<dbReference type="GO" id="GO:0046872">
    <property type="term" value="F:metal ion binding"/>
    <property type="evidence" value="ECO:0007669"/>
    <property type="project" value="UniProtKB-KW"/>
</dbReference>
<dbReference type="GO" id="GO:0006281">
    <property type="term" value="P:DNA repair"/>
    <property type="evidence" value="ECO:0007669"/>
    <property type="project" value="UniProtKB-KW"/>
</dbReference>
<dbReference type="GO" id="GO:0006260">
    <property type="term" value="P:DNA replication"/>
    <property type="evidence" value="ECO:0007669"/>
    <property type="project" value="UniProtKB-KW"/>
</dbReference>
<dbReference type="CDD" id="cd17748">
    <property type="entry name" value="BRCT_DNA_ligase_like"/>
    <property type="match status" value="1"/>
</dbReference>
<dbReference type="CDD" id="cd00114">
    <property type="entry name" value="LIGANc"/>
    <property type="match status" value="1"/>
</dbReference>
<dbReference type="FunFam" id="1.10.150.20:FF:000006">
    <property type="entry name" value="DNA ligase"/>
    <property type="match status" value="1"/>
</dbReference>
<dbReference type="FunFam" id="1.10.150.20:FF:000007">
    <property type="entry name" value="DNA ligase"/>
    <property type="match status" value="1"/>
</dbReference>
<dbReference type="FunFam" id="1.10.287.610:FF:000002">
    <property type="entry name" value="DNA ligase"/>
    <property type="match status" value="1"/>
</dbReference>
<dbReference type="FunFam" id="2.40.50.140:FF:000012">
    <property type="entry name" value="DNA ligase"/>
    <property type="match status" value="1"/>
</dbReference>
<dbReference type="FunFam" id="3.30.470.30:FF:000001">
    <property type="entry name" value="DNA ligase"/>
    <property type="match status" value="1"/>
</dbReference>
<dbReference type="Gene3D" id="6.20.10.30">
    <property type="match status" value="1"/>
</dbReference>
<dbReference type="Gene3D" id="1.10.150.20">
    <property type="entry name" value="5' to 3' exonuclease, C-terminal subdomain"/>
    <property type="match status" value="2"/>
</dbReference>
<dbReference type="Gene3D" id="3.40.50.10190">
    <property type="entry name" value="BRCT domain"/>
    <property type="match status" value="1"/>
</dbReference>
<dbReference type="Gene3D" id="3.30.470.30">
    <property type="entry name" value="DNA ligase/mRNA capping enzyme"/>
    <property type="match status" value="1"/>
</dbReference>
<dbReference type="Gene3D" id="1.10.287.610">
    <property type="entry name" value="Helix hairpin bin"/>
    <property type="match status" value="1"/>
</dbReference>
<dbReference type="Gene3D" id="2.40.50.140">
    <property type="entry name" value="Nucleic acid-binding proteins"/>
    <property type="match status" value="1"/>
</dbReference>
<dbReference type="HAMAP" id="MF_01588">
    <property type="entry name" value="DNA_ligase_A"/>
    <property type="match status" value="1"/>
</dbReference>
<dbReference type="InterPro" id="IPR001357">
    <property type="entry name" value="BRCT_dom"/>
</dbReference>
<dbReference type="InterPro" id="IPR036420">
    <property type="entry name" value="BRCT_dom_sf"/>
</dbReference>
<dbReference type="InterPro" id="IPR041663">
    <property type="entry name" value="DisA/LigA_HHH"/>
</dbReference>
<dbReference type="InterPro" id="IPR001679">
    <property type="entry name" value="DNA_ligase"/>
</dbReference>
<dbReference type="InterPro" id="IPR033136">
    <property type="entry name" value="DNA_ligase_CS"/>
</dbReference>
<dbReference type="InterPro" id="IPR013839">
    <property type="entry name" value="DNAligase_adenylation"/>
</dbReference>
<dbReference type="InterPro" id="IPR013840">
    <property type="entry name" value="DNAligase_N"/>
</dbReference>
<dbReference type="InterPro" id="IPR003583">
    <property type="entry name" value="Hlx-hairpin-Hlx_DNA-bd_motif"/>
</dbReference>
<dbReference type="InterPro" id="IPR012340">
    <property type="entry name" value="NA-bd_OB-fold"/>
</dbReference>
<dbReference type="InterPro" id="IPR004150">
    <property type="entry name" value="NAD_DNA_ligase_OB"/>
</dbReference>
<dbReference type="InterPro" id="IPR010994">
    <property type="entry name" value="RuvA_2-like"/>
</dbReference>
<dbReference type="InterPro" id="IPR004149">
    <property type="entry name" value="Znf_DNAligase_C4"/>
</dbReference>
<dbReference type="NCBIfam" id="TIGR00575">
    <property type="entry name" value="dnlj"/>
    <property type="match status" value="1"/>
</dbReference>
<dbReference type="NCBIfam" id="NF005932">
    <property type="entry name" value="PRK07956.1"/>
    <property type="match status" value="1"/>
</dbReference>
<dbReference type="PANTHER" id="PTHR23389">
    <property type="entry name" value="CHROMOSOME TRANSMISSION FIDELITY FACTOR 18"/>
    <property type="match status" value="1"/>
</dbReference>
<dbReference type="PANTHER" id="PTHR23389:SF9">
    <property type="entry name" value="DNA LIGASE"/>
    <property type="match status" value="1"/>
</dbReference>
<dbReference type="Pfam" id="PF00533">
    <property type="entry name" value="BRCT"/>
    <property type="match status" value="1"/>
</dbReference>
<dbReference type="Pfam" id="PF01653">
    <property type="entry name" value="DNA_ligase_aden"/>
    <property type="match status" value="1"/>
</dbReference>
<dbReference type="Pfam" id="PF03120">
    <property type="entry name" value="DNA_ligase_OB"/>
    <property type="match status" value="1"/>
</dbReference>
<dbReference type="Pfam" id="PF03119">
    <property type="entry name" value="DNA_ligase_ZBD"/>
    <property type="match status" value="1"/>
</dbReference>
<dbReference type="Pfam" id="PF12826">
    <property type="entry name" value="HHH_2"/>
    <property type="match status" value="1"/>
</dbReference>
<dbReference type="Pfam" id="PF14520">
    <property type="entry name" value="HHH_5"/>
    <property type="match status" value="1"/>
</dbReference>
<dbReference type="Pfam" id="PF22745">
    <property type="entry name" value="Nlig-Ia"/>
    <property type="match status" value="1"/>
</dbReference>
<dbReference type="PIRSF" id="PIRSF001604">
    <property type="entry name" value="LigA"/>
    <property type="match status" value="1"/>
</dbReference>
<dbReference type="SMART" id="SM00292">
    <property type="entry name" value="BRCT"/>
    <property type="match status" value="1"/>
</dbReference>
<dbReference type="SMART" id="SM00278">
    <property type="entry name" value="HhH1"/>
    <property type="match status" value="3"/>
</dbReference>
<dbReference type="SMART" id="SM00532">
    <property type="entry name" value="LIGANc"/>
    <property type="match status" value="1"/>
</dbReference>
<dbReference type="SUPFAM" id="SSF52113">
    <property type="entry name" value="BRCT domain"/>
    <property type="match status" value="1"/>
</dbReference>
<dbReference type="SUPFAM" id="SSF56091">
    <property type="entry name" value="DNA ligase/mRNA capping enzyme, catalytic domain"/>
    <property type="match status" value="1"/>
</dbReference>
<dbReference type="SUPFAM" id="SSF50249">
    <property type="entry name" value="Nucleic acid-binding proteins"/>
    <property type="match status" value="1"/>
</dbReference>
<dbReference type="SUPFAM" id="SSF47781">
    <property type="entry name" value="RuvA domain 2-like"/>
    <property type="match status" value="1"/>
</dbReference>
<dbReference type="PROSITE" id="PS50172">
    <property type="entry name" value="BRCT"/>
    <property type="match status" value="1"/>
</dbReference>
<dbReference type="PROSITE" id="PS01056">
    <property type="entry name" value="DNA_LIGASE_N2"/>
    <property type="match status" value="1"/>
</dbReference>
<protein>
    <recommendedName>
        <fullName evidence="1">DNA ligase</fullName>
        <ecNumber evidence="1">6.5.1.2</ecNumber>
    </recommendedName>
    <alternativeName>
        <fullName evidence="1">Polydeoxyribonucleotide synthase [NAD(+)]</fullName>
    </alternativeName>
</protein>
<reference key="1">
    <citation type="journal article" date="2008" name="J. Bacteriol.">
        <title>The genome of Heliobacterium modesticaldum, a phototrophic representative of the Firmicutes containing the simplest photosynthetic apparatus.</title>
        <authorList>
            <person name="Sattley W.M."/>
            <person name="Madigan M.T."/>
            <person name="Swingley W.D."/>
            <person name="Cheung P.C."/>
            <person name="Clocksin K.M."/>
            <person name="Conrad A.L."/>
            <person name="Dejesa L.C."/>
            <person name="Honchak B.M."/>
            <person name="Jung D.O."/>
            <person name="Karbach L.E."/>
            <person name="Kurdoglu A."/>
            <person name="Lahiri S."/>
            <person name="Mastrian S.D."/>
            <person name="Page L.E."/>
            <person name="Taylor H.L."/>
            <person name="Wang Z.T."/>
            <person name="Raymond J."/>
            <person name="Chen M."/>
            <person name="Blankenship R.E."/>
            <person name="Touchman J.W."/>
        </authorList>
    </citation>
    <scope>NUCLEOTIDE SEQUENCE [LARGE SCALE GENOMIC DNA]</scope>
    <source>
        <strain>ATCC 51547 / Ice1</strain>
    </source>
</reference>
<accession>B0TDL0</accession>
<evidence type="ECO:0000255" key="1">
    <source>
        <dbReference type="HAMAP-Rule" id="MF_01588"/>
    </source>
</evidence>
<organism>
    <name type="scientific">Heliobacterium modesticaldum (strain ATCC 51547 / Ice1)</name>
    <dbReference type="NCBI Taxonomy" id="498761"/>
    <lineage>
        <taxon>Bacteria</taxon>
        <taxon>Bacillati</taxon>
        <taxon>Bacillota</taxon>
        <taxon>Clostridia</taxon>
        <taxon>Eubacteriales</taxon>
        <taxon>Heliobacteriaceae</taxon>
        <taxon>Heliomicrobium</taxon>
    </lineage>
</organism>
<gene>
    <name evidence="1" type="primary">ligA</name>
    <name type="ordered locus">Helmi_29100</name>
    <name type="ORF">HM1_3028</name>
</gene>
<name>DNLJ_HELMI</name>